<proteinExistence type="inferred from homology"/>
<gene>
    <name evidence="1" type="primary">matK</name>
</gene>
<evidence type="ECO:0000255" key="1">
    <source>
        <dbReference type="HAMAP-Rule" id="MF_01390"/>
    </source>
</evidence>
<geneLocation type="chloroplast"/>
<keyword id="KW-0150">Chloroplast</keyword>
<keyword id="KW-0507">mRNA processing</keyword>
<keyword id="KW-0934">Plastid</keyword>
<keyword id="KW-0694">RNA-binding</keyword>
<keyword id="KW-0819">tRNA processing</keyword>
<feature type="chain" id="PRO_0000143283" description="Maturase K">
    <location>
        <begin position="1"/>
        <end position="505"/>
    </location>
</feature>
<comment type="function">
    <text evidence="1">Usually encoded in the trnK tRNA gene intron. Probably assists in splicing its own and other chloroplast group II introns.</text>
</comment>
<comment type="subcellular location">
    <subcellularLocation>
        <location>Plastid</location>
        <location>Chloroplast</location>
    </subcellularLocation>
</comment>
<comment type="similarity">
    <text evidence="1">Belongs to the intron maturase 2 family. MatK subfamily.</text>
</comment>
<organism>
    <name type="scientific">Beta vulgaris</name>
    <name type="common">Sugar beet</name>
    <dbReference type="NCBI Taxonomy" id="161934"/>
    <lineage>
        <taxon>Eukaryota</taxon>
        <taxon>Viridiplantae</taxon>
        <taxon>Streptophyta</taxon>
        <taxon>Embryophyta</taxon>
        <taxon>Tracheophyta</taxon>
        <taxon>Spermatophyta</taxon>
        <taxon>Magnoliopsida</taxon>
        <taxon>eudicotyledons</taxon>
        <taxon>Gunneridae</taxon>
        <taxon>Pentapetalae</taxon>
        <taxon>Caryophyllales</taxon>
        <taxon>Chenopodiaceae</taxon>
        <taxon>Betoideae</taxon>
        <taxon>Beta</taxon>
    </lineage>
</organism>
<protein>
    <recommendedName>
        <fullName evidence="1">Maturase K</fullName>
    </recommendedName>
    <alternativeName>
        <fullName evidence="1">Intron maturase</fullName>
    </alternativeName>
</protein>
<reference key="1">
    <citation type="journal article" date="2005" name="Ann. Mo. Bot. Gard.">
        <title>Phylogenetics of Amaranthaceae based on matK/trnK sequence data -- evidence from parsimony, likelihood, and Bayesian analyses.</title>
        <authorList>
            <person name="Mueller K.F."/>
            <person name="Borsch T."/>
        </authorList>
    </citation>
    <scope>NUCLEOTIDE SEQUENCE [GENOMIC DNA]</scope>
</reference>
<name>MATK_BETVU</name>
<sequence>MEEFQGHIELDRSWQHNFFYPLIFQEYIYAFAYDHGLNKSILLENSGDKKYSLLIVKRLITRMSQQNHLILSANDSNQNEIFGHKNKKKLYSEMITEGFAVIVEIPFSLLLISSLEGKEIVKSHNLRSIHSIFPFLEDKFLHLNYVLDILIPYPAHLEILVQTLRYWLKDASSLHFLRFFLYEYRNWNSLITQKEFISFLKKRNQRLFLFLYNFHVCEYESLFVFLRNQSSYLRSTSFGALLERIHFYGKIKYLVKVFTNDLGVIQWFFKEPFPHYVRYQGKSILASKGTFFLMHKWKYYIIYFWQCNFSVWSQPRKIYINRLSNHSLDFMGFFSSVRLNSSVIRSQLLENSFLIENIIKKFDTIVPIIPLVGSLAKAKFCNVLGHPVSKSVWADLSDSDIIDRFGRICRNLSHYYSGSSRKKSLYRIKYILRLSCARTLSRKHKSTVRSFLKRLGSEFLEEFFTEEEKVLSLILPRDSSTSWGLYKRRIWYLDIICIHKLVNDE</sequence>
<accession>Q5J2X6</accession>
<dbReference type="EMBL" id="AY514832">
    <property type="protein sequence ID" value="AAT28262.1"/>
    <property type="molecule type" value="Genomic_DNA"/>
</dbReference>
<dbReference type="GO" id="GO:0009507">
    <property type="term" value="C:chloroplast"/>
    <property type="evidence" value="ECO:0007669"/>
    <property type="project" value="UniProtKB-SubCell"/>
</dbReference>
<dbReference type="GO" id="GO:0003723">
    <property type="term" value="F:RNA binding"/>
    <property type="evidence" value="ECO:0007669"/>
    <property type="project" value="UniProtKB-KW"/>
</dbReference>
<dbReference type="GO" id="GO:0006397">
    <property type="term" value="P:mRNA processing"/>
    <property type="evidence" value="ECO:0007669"/>
    <property type="project" value="UniProtKB-KW"/>
</dbReference>
<dbReference type="GO" id="GO:0008380">
    <property type="term" value="P:RNA splicing"/>
    <property type="evidence" value="ECO:0007669"/>
    <property type="project" value="UniProtKB-UniRule"/>
</dbReference>
<dbReference type="GO" id="GO:0008033">
    <property type="term" value="P:tRNA processing"/>
    <property type="evidence" value="ECO:0007669"/>
    <property type="project" value="UniProtKB-KW"/>
</dbReference>
<dbReference type="HAMAP" id="MF_01390">
    <property type="entry name" value="MatK"/>
    <property type="match status" value="1"/>
</dbReference>
<dbReference type="InterPro" id="IPR024937">
    <property type="entry name" value="Domain_X"/>
</dbReference>
<dbReference type="InterPro" id="IPR002866">
    <property type="entry name" value="Maturase_MatK"/>
</dbReference>
<dbReference type="InterPro" id="IPR024942">
    <property type="entry name" value="Maturase_MatK_N"/>
</dbReference>
<dbReference type="PANTHER" id="PTHR34811">
    <property type="entry name" value="MATURASE K"/>
    <property type="match status" value="1"/>
</dbReference>
<dbReference type="PANTHER" id="PTHR34811:SF1">
    <property type="entry name" value="MATURASE K"/>
    <property type="match status" value="1"/>
</dbReference>
<dbReference type="Pfam" id="PF01348">
    <property type="entry name" value="Intron_maturas2"/>
    <property type="match status" value="1"/>
</dbReference>
<dbReference type="Pfam" id="PF01824">
    <property type="entry name" value="MatK_N"/>
    <property type="match status" value="1"/>
</dbReference>